<dbReference type="EC" id="6.1.1.22" evidence="1"/>
<dbReference type="EMBL" id="AE017221">
    <property type="protein sequence ID" value="AAS80704.1"/>
    <property type="molecule type" value="Genomic_DNA"/>
</dbReference>
<dbReference type="RefSeq" id="WP_011172806.1">
    <property type="nucleotide sequence ID" value="NC_005835.1"/>
</dbReference>
<dbReference type="SMR" id="Q72KF7"/>
<dbReference type="KEGG" id="tth:TT_C0356"/>
<dbReference type="eggNOG" id="COG0017">
    <property type="taxonomic scope" value="Bacteria"/>
</dbReference>
<dbReference type="HOGENOM" id="CLU_004553_2_0_0"/>
<dbReference type="OrthoDB" id="9762036at2"/>
<dbReference type="Proteomes" id="UP000000592">
    <property type="component" value="Chromosome"/>
</dbReference>
<dbReference type="GO" id="GO:0005737">
    <property type="term" value="C:cytoplasm"/>
    <property type="evidence" value="ECO:0007669"/>
    <property type="project" value="UniProtKB-SubCell"/>
</dbReference>
<dbReference type="GO" id="GO:0004816">
    <property type="term" value="F:asparagine-tRNA ligase activity"/>
    <property type="evidence" value="ECO:0007669"/>
    <property type="project" value="UniProtKB-UniRule"/>
</dbReference>
<dbReference type="GO" id="GO:0005524">
    <property type="term" value="F:ATP binding"/>
    <property type="evidence" value="ECO:0007669"/>
    <property type="project" value="UniProtKB-UniRule"/>
</dbReference>
<dbReference type="GO" id="GO:0003676">
    <property type="term" value="F:nucleic acid binding"/>
    <property type="evidence" value="ECO:0007669"/>
    <property type="project" value="InterPro"/>
</dbReference>
<dbReference type="GO" id="GO:0006421">
    <property type="term" value="P:asparaginyl-tRNA aminoacylation"/>
    <property type="evidence" value="ECO:0007669"/>
    <property type="project" value="UniProtKB-UniRule"/>
</dbReference>
<dbReference type="CDD" id="cd04323">
    <property type="entry name" value="AsnRS_cyto_like_N"/>
    <property type="match status" value="1"/>
</dbReference>
<dbReference type="CDD" id="cd00776">
    <property type="entry name" value="AsxRS_core"/>
    <property type="match status" value="1"/>
</dbReference>
<dbReference type="FunFam" id="3.30.930.10:FF:000016">
    <property type="entry name" value="Asparagine--tRNA ligase"/>
    <property type="match status" value="1"/>
</dbReference>
<dbReference type="Gene3D" id="3.30.930.10">
    <property type="entry name" value="Bira Bifunctional Protein, Domain 2"/>
    <property type="match status" value="1"/>
</dbReference>
<dbReference type="Gene3D" id="2.40.50.140">
    <property type="entry name" value="Nucleic acid-binding proteins"/>
    <property type="match status" value="1"/>
</dbReference>
<dbReference type="HAMAP" id="MF_00534">
    <property type="entry name" value="Asn_tRNA_synth"/>
    <property type="match status" value="1"/>
</dbReference>
<dbReference type="InterPro" id="IPR004364">
    <property type="entry name" value="Aa-tRNA-synt_II"/>
</dbReference>
<dbReference type="InterPro" id="IPR006195">
    <property type="entry name" value="aa-tRNA-synth_II"/>
</dbReference>
<dbReference type="InterPro" id="IPR045864">
    <property type="entry name" value="aa-tRNA-synth_II/BPL/LPL"/>
</dbReference>
<dbReference type="InterPro" id="IPR004522">
    <property type="entry name" value="Asn-tRNA-ligase"/>
</dbReference>
<dbReference type="InterPro" id="IPR002312">
    <property type="entry name" value="Asp/Asn-tRNA-synth_IIb"/>
</dbReference>
<dbReference type="InterPro" id="IPR012340">
    <property type="entry name" value="NA-bd_OB-fold"/>
</dbReference>
<dbReference type="InterPro" id="IPR004365">
    <property type="entry name" value="NA-bd_OB_tRNA"/>
</dbReference>
<dbReference type="NCBIfam" id="TIGR00457">
    <property type="entry name" value="asnS"/>
    <property type="match status" value="1"/>
</dbReference>
<dbReference type="NCBIfam" id="NF003037">
    <property type="entry name" value="PRK03932.1"/>
    <property type="match status" value="1"/>
</dbReference>
<dbReference type="PANTHER" id="PTHR22594:SF34">
    <property type="entry name" value="ASPARAGINE--TRNA LIGASE, MITOCHONDRIAL-RELATED"/>
    <property type="match status" value="1"/>
</dbReference>
<dbReference type="PANTHER" id="PTHR22594">
    <property type="entry name" value="ASPARTYL/LYSYL-TRNA SYNTHETASE"/>
    <property type="match status" value="1"/>
</dbReference>
<dbReference type="Pfam" id="PF00152">
    <property type="entry name" value="tRNA-synt_2"/>
    <property type="match status" value="1"/>
</dbReference>
<dbReference type="Pfam" id="PF01336">
    <property type="entry name" value="tRNA_anti-codon"/>
    <property type="match status" value="1"/>
</dbReference>
<dbReference type="PRINTS" id="PR01042">
    <property type="entry name" value="TRNASYNTHASP"/>
</dbReference>
<dbReference type="SUPFAM" id="SSF55681">
    <property type="entry name" value="Class II aaRS and biotin synthetases"/>
    <property type="match status" value="1"/>
</dbReference>
<dbReference type="SUPFAM" id="SSF50249">
    <property type="entry name" value="Nucleic acid-binding proteins"/>
    <property type="match status" value="1"/>
</dbReference>
<dbReference type="PROSITE" id="PS50862">
    <property type="entry name" value="AA_TRNA_LIGASE_II"/>
    <property type="match status" value="1"/>
</dbReference>
<reference key="1">
    <citation type="journal article" date="2004" name="Nat. Biotechnol.">
        <title>The genome sequence of the extreme thermophile Thermus thermophilus.</title>
        <authorList>
            <person name="Henne A."/>
            <person name="Brueggemann H."/>
            <person name="Raasch C."/>
            <person name="Wiezer A."/>
            <person name="Hartsch T."/>
            <person name="Liesegang H."/>
            <person name="Johann A."/>
            <person name="Lienard T."/>
            <person name="Gohl O."/>
            <person name="Martinez-Arias R."/>
            <person name="Jacobi C."/>
            <person name="Starkuviene V."/>
            <person name="Schlenczeck S."/>
            <person name="Dencker S."/>
            <person name="Huber R."/>
            <person name="Klenk H.-P."/>
            <person name="Kramer W."/>
            <person name="Merkl R."/>
            <person name="Gottschalk G."/>
            <person name="Fritz H.-J."/>
        </authorList>
    </citation>
    <scope>NUCLEOTIDE SEQUENCE [LARGE SCALE GENOMIC DNA]</scope>
    <source>
        <strain>ATCC BAA-163 / DSM 7039 / HB27</strain>
    </source>
</reference>
<organism>
    <name type="scientific">Thermus thermophilus (strain ATCC BAA-163 / DSM 7039 / HB27)</name>
    <dbReference type="NCBI Taxonomy" id="262724"/>
    <lineage>
        <taxon>Bacteria</taxon>
        <taxon>Thermotogati</taxon>
        <taxon>Deinococcota</taxon>
        <taxon>Deinococci</taxon>
        <taxon>Thermales</taxon>
        <taxon>Thermaceae</taxon>
        <taxon>Thermus</taxon>
    </lineage>
</organism>
<evidence type="ECO:0000255" key="1">
    <source>
        <dbReference type="HAMAP-Rule" id="MF_00534"/>
    </source>
</evidence>
<gene>
    <name evidence="1" type="primary">asnS</name>
    <name type="ordered locus">TT_C0356</name>
</gene>
<comment type="catalytic activity">
    <reaction evidence="1">
        <text>tRNA(Asn) + L-asparagine + ATP = L-asparaginyl-tRNA(Asn) + AMP + diphosphate + H(+)</text>
        <dbReference type="Rhea" id="RHEA:11180"/>
        <dbReference type="Rhea" id="RHEA-COMP:9659"/>
        <dbReference type="Rhea" id="RHEA-COMP:9674"/>
        <dbReference type="ChEBI" id="CHEBI:15378"/>
        <dbReference type="ChEBI" id="CHEBI:30616"/>
        <dbReference type="ChEBI" id="CHEBI:33019"/>
        <dbReference type="ChEBI" id="CHEBI:58048"/>
        <dbReference type="ChEBI" id="CHEBI:78442"/>
        <dbReference type="ChEBI" id="CHEBI:78515"/>
        <dbReference type="ChEBI" id="CHEBI:456215"/>
        <dbReference type="EC" id="6.1.1.22"/>
    </reaction>
</comment>
<comment type="subunit">
    <text evidence="1">Homodimer.</text>
</comment>
<comment type="subcellular location">
    <subcellularLocation>
        <location evidence="1">Cytoplasm</location>
    </subcellularLocation>
</comment>
<comment type="similarity">
    <text evidence="1">Belongs to the class-II aminoacyl-tRNA synthetase family.</text>
</comment>
<sequence length="438" mass="50759">MRVFIDEIARHVDQEVELRGWLYQRRSKGKIHFLILRDGTGFLQATVVQGEVPEAVFREADHLPQETALRVWGRVREDRRAPGGFELAVRDLQVVSRPQGEYPIGPKEHGIDFLMDHRHLWLRHRRPFAVMRIRDELERAIHEFFGERGFLRFDAPILTPSAVEGTTELFEVELFDGEKAYLSQSGQLYAEAGALAFAKVYTFGPTFRAERSKTRRHLLEFWMVEPEVAFMTHEENMALQEELVSFLVARVLERRSRELEMLGRDPKALEPAAEGHYARLTYKEAVALVNRIAQEDPEVPPLPYGEDFGAPHEAALSRRFDRPVFVERYPARIKAFYMEPDPEDPELVLNDDLLAPEGYGEIIGGSQRIHDLELLRRKIQEFGLPEEVYDWYLDLRRFGSVPHSGFGLGLERTVAWICGLAHVREAIPFPRMYTRMRP</sequence>
<keyword id="KW-0030">Aminoacyl-tRNA synthetase</keyword>
<keyword id="KW-0067">ATP-binding</keyword>
<keyword id="KW-0963">Cytoplasm</keyword>
<keyword id="KW-0436">Ligase</keyword>
<keyword id="KW-0547">Nucleotide-binding</keyword>
<keyword id="KW-0648">Protein biosynthesis</keyword>
<protein>
    <recommendedName>
        <fullName evidence="1">Asparagine--tRNA ligase</fullName>
        <ecNumber evidence="1">6.1.1.22</ecNumber>
    </recommendedName>
    <alternativeName>
        <fullName evidence="1">Asparaginyl-tRNA synthetase</fullName>
        <shortName evidence="1">AsnRS</shortName>
    </alternativeName>
</protein>
<proteinExistence type="inferred from homology"/>
<name>SYN_THET2</name>
<accession>Q72KF7</accession>
<feature type="chain" id="PRO_0000176469" description="Asparagine--tRNA ligase">
    <location>
        <begin position="1"/>
        <end position="438"/>
    </location>
</feature>